<gene>
    <name type="primary">ppiA</name>
    <name type="ordered locus">BQ2027_MB0009</name>
</gene>
<organism>
    <name type="scientific">Mycobacterium bovis (strain ATCC BAA-935 / AF2122/97)</name>
    <dbReference type="NCBI Taxonomy" id="233413"/>
    <lineage>
        <taxon>Bacteria</taxon>
        <taxon>Bacillati</taxon>
        <taxon>Actinomycetota</taxon>
        <taxon>Actinomycetes</taxon>
        <taxon>Mycobacteriales</taxon>
        <taxon>Mycobacteriaceae</taxon>
        <taxon>Mycobacterium</taxon>
        <taxon>Mycobacterium tuberculosis complex</taxon>
    </lineage>
</organism>
<keyword id="KW-0963">Cytoplasm</keyword>
<keyword id="KW-0413">Isomerase</keyword>
<keyword id="KW-1185">Reference proteome</keyword>
<keyword id="KW-0697">Rotamase</keyword>
<evidence type="ECO:0000250" key="1"/>
<evidence type="ECO:0000255" key="2">
    <source>
        <dbReference type="PROSITE-ProRule" id="PRU00156"/>
    </source>
</evidence>
<evidence type="ECO:0000305" key="3"/>
<protein>
    <recommendedName>
        <fullName>Probable peptidyl-prolyl cis-trans isomerase A</fullName>
        <shortName>PPIase A</shortName>
        <ecNumber>5.2.1.8</ecNumber>
    </recommendedName>
    <alternativeName>
        <fullName>Rotamase A</fullName>
    </alternativeName>
</protein>
<proteinExistence type="inferred from homology"/>
<sequence>MADCDSVTNSPLATATATLHTNRGDIKIALFGNHAPKTVANFVGLAQGTKDYSTQNASGGPSGPFYDGAVFHRVIQGFMIQGGDPTGTGRGGPGYKFADEFHPELQFDKPYLLAMANAGPGTNGSQFFITVGKTPHLNRRHTIFGEVIDAESQRVVEAISKTATDGNDRPTDPVVIESITIS</sequence>
<name>PPIA_MYCBO</name>
<accession>P65763</accession>
<accession>A0A1R3XU75</accession>
<accession>P71578</accession>
<accession>X2BDS2</accession>
<dbReference type="EC" id="5.2.1.8"/>
<dbReference type="EMBL" id="LT708304">
    <property type="protein sequence ID" value="SIT98352.1"/>
    <property type="molecule type" value="Genomic_DNA"/>
</dbReference>
<dbReference type="RefSeq" id="NP_853679.1">
    <property type="nucleotide sequence ID" value="NC_002945.3"/>
</dbReference>
<dbReference type="RefSeq" id="WP_003400321.1">
    <property type="nucleotide sequence ID" value="NC_002945.4"/>
</dbReference>
<dbReference type="SMR" id="P65763"/>
<dbReference type="GeneID" id="45423968"/>
<dbReference type="KEGG" id="mbo:BQ2027_MB0009"/>
<dbReference type="PATRIC" id="fig|233413.5.peg.12"/>
<dbReference type="Proteomes" id="UP000001419">
    <property type="component" value="Chromosome"/>
</dbReference>
<dbReference type="GO" id="GO:0005737">
    <property type="term" value="C:cytoplasm"/>
    <property type="evidence" value="ECO:0007669"/>
    <property type="project" value="UniProtKB-SubCell"/>
</dbReference>
<dbReference type="GO" id="GO:0003755">
    <property type="term" value="F:peptidyl-prolyl cis-trans isomerase activity"/>
    <property type="evidence" value="ECO:0007669"/>
    <property type="project" value="UniProtKB-KW"/>
</dbReference>
<dbReference type="GO" id="GO:0006457">
    <property type="term" value="P:protein folding"/>
    <property type="evidence" value="ECO:0007669"/>
    <property type="project" value="InterPro"/>
</dbReference>
<dbReference type="CDD" id="cd00317">
    <property type="entry name" value="cyclophilin"/>
    <property type="match status" value="1"/>
</dbReference>
<dbReference type="FunFam" id="2.40.100.10:FF:000028">
    <property type="entry name" value="Peptidyl-prolyl cis-trans isomerase"/>
    <property type="match status" value="1"/>
</dbReference>
<dbReference type="Gene3D" id="2.40.100.10">
    <property type="entry name" value="Cyclophilin-like"/>
    <property type="match status" value="1"/>
</dbReference>
<dbReference type="InterPro" id="IPR029000">
    <property type="entry name" value="Cyclophilin-like_dom_sf"/>
</dbReference>
<dbReference type="InterPro" id="IPR024936">
    <property type="entry name" value="Cyclophilin-type_PPIase"/>
</dbReference>
<dbReference type="InterPro" id="IPR020892">
    <property type="entry name" value="Cyclophilin-type_PPIase_CS"/>
</dbReference>
<dbReference type="InterPro" id="IPR002130">
    <property type="entry name" value="Cyclophilin-type_PPIase_dom"/>
</dbReference>
<dbReference type="InterPro" id="IPR044666">
    <property type="entry name" value="Cyclophilin_A-like"/>
</dbReference>
<dbReference type="PANTHER" id="PTHR45625">
    <property type="entry name" value="PEPTIDYL-PROLYL CIS-TRANS ISOMERASE-RELATED"/>
    <property type="match status" value="1"/>
</dbReference>
<dbReference type="PANTHER" id="PTHR45625:SF4">
    <property type="entry name" value="PEPTIDYLPROLYL ISOMERASE DOMAIN AND WD REPEAT-CONTAINING PROTEIN 1"/>
    <property type="match status" value="1"/>
</dbReference>
<dbReference type="Pfam" id="PF00160">
    <property type="entry name" value="Pro_isomerase"/>
    <property type="match status" value="1"/>
</dbReference>
<dbReference type="PIRSF" id="PIRSF001467">
    <property type="entry name" value="Peptidylpro_ismrse"/>
    <property type="match status" value="1"/>
</dbReference>
<dbReference type="PRINTS" id="PR00153">
    <property type="entry name" value="CSAPPISMRASE"/>
</dbReference>
<dbReference type="SUPFAM" id="SSF50891">
    <property type="entry name" value="Cyclophilin-like"/>
    <property type="match status" value="1"/>
</dbReference>
<dbReference type="PROSITE" id="PS00170">
    <property type="entry name" value="CSA_PPIASE_1"/>
    <property type="match status" value="1"/>
</dbReference>
<dbReference type="PROSITE" id="PS50072">
    <property type="entry name" value="CSA_PPIASE_2"/>
    <property type="match status" value="1"/>
</dbReference>
<comment type="function">
    <text evidence="1">PPIases accelerate the folding of proteins. It catalyzes the cis-trans isomerization of proline imidic peptide bonds in oligopeptides (By similarity).</text>
</comment>
<comment type="catalytic activity">
    <reaction>
        <text>[protein]-peptidylproline (omega=180) = [protein]-peptidylproline (omega=0)</text>
        <dbReference type="Rhea" id="RHEA:16237"/>
        <dbReference type="Rhea" id="RHEA-COMP:10747"/>
        <dbReference type="Rhea" id="RHEA-COMP:10748"/>
        <dbReference type="ChEBI" id="CHEBI:83833"/>
        <dbReference type="ChEBI" id="CHEBI:83834"/>
        <dbReference type="EC" id="5.2.1.8"/>
    </reaction>
</comment>
<comment type="subcellular location">
    <subcellularLocation>
        <location evidence="1">Cytoplasm</location>
    </subcellularLocation>
</comment>
<comment type="similarity">
    <text evidence="3">Belongs to the cyclophilin-type PPIase family.</text>
</comment>
<reference key="1">
    <citation type="journal article" date="2003" name="Proc. Natl. Acad. Sci. U.S.A.">
        <title>The complete genome sequence of Mycobacterium bovis.</title>
        <authorList>
            <person name="Garnier T."/>
            <person name="Eiglmeier K."/>
            <person name="Camus J.-C."/>
            <person name="Medina N."/>
            <person name="Mansoor H."/>
            <person name="Pryor M."/>
            <person name="Duthoy S."/>
            <person name="Grondin S."/>
            <person name="Lacroix C."/>
            <person name="Monsempe C."/>
            <person name="Simon S."/>
            <person name="Harris B."/>
            <person name="Atkin R."/>
            <person name="Doggett J."/>
            <person name="Mayes R."/>
            <person name="Keating L."/>
            <person name="Wheeler P.R."/>
            <person name="Parkhill J."/>
            <person name="Barrell B.G."/>
            <person name="Cole S.T."/>
            <person name="Gordon S.V."/>
            <person name="Hewinson R.G."/>
        </authorList>
    </citation>
    <scope>NUCLEOTIDE SEQUENCE [LARGE SCALE GENOMIC DNA]</scope>
    <source>
        <strain>ATCC BAA-935 / AF2122/97</strain>
    </source>
</reference>
<reference key="2">
    <citation type="journal article" date="2017" name="Genome Announc.">
        <title>Updated reference genome sequence and annotation of Mycobacterium bovis AF2122/97.</title>
        <authorList>
            <person name="Malone K.M."/>
            <person name="Farrell D."/>
            <person name="Stuber T.P."/>
            <person name="Schubert O.T."/>
            <person name="Aebersold R."/>
            <person name="Robbe-Austerman S."/>
            <person name="Gordon S.V."/>
        </authorList>
    </citation>
    <scope>NUCLEOTIDE SEQUENCE [LARGE SCALE GENOMIC DNA]</scope>
    <scope>GENOME REANNOTATION</scope>
    <source>
        <strain>ATCC BAA-935 / AF2122/97</strain>
    </source>
</reference>
<feature type="chain" id="PRO_0000064210" description="Probable peptidyl-prolyl cis-trans isomerase A">
    <location>
        <begin position="1"/>
        <end position="182"/>
    </location>
</feature>
<feature type="domain" description="PPIase cyclophilin-type" evidence="2">
    <location>
        <begin position="13"/>
        <end position="181"/>
    </location>
</feature>